<proteinExistence type="inferred from homology"/>
<name>TRUA_JANMA</name>
<reference key="1">
    <citation type="journal article" date="2007" name="PLoS Genet.">
        <title>Genome analysis of Minibacterium massiliensis highlights the convergent evolution of water-living bacteria.</title>
        <authorList>
            <person name="Audic S."/>
            <person name="Robert C."/>
            <person name="Campagna B."/>
            <person name="Parinello H."/>
            <person name="Claverie J.-M."/>
            <person name="Raoult D."/>
            <person name="Drancourt M."/>
        </authorList>
    </citation>
    <scope>NUCLEOTIDE SEQUENCE [LARGE SCALE GENOMIC DNA]</scope>
    <source>
        <strain>Marseille</strain>
    </source>
</reference>
<evidence type="ECO:0000255" key="1">
    <source>
        <dbReference type="HAMAP-Rule" id="MF_00171"/>
    </source>
</evidence>
<dbReference type="EC" id="5.4.99.12" evidence="1"/>
<dbReference type="EMBL" id="CP000269">
    <property type="protein sequence ID" value="ABR89348.1"/>
    <property type="molecule type" value="Genomic_DNA"/>
</dbReference>
<dbReference type="RefSeq" id="WP_012080019.1">
    <property type="nucleotide sequence ID" value="NC_009659.1"/>
</dbReference>
<dbReference type="SMR" id="A6T009"/>
<dbReference type="STRING" id="375286.mma_2166"/>
<dbReference type="KEGG" id="mms:mma_2166"/>
<dbReference type="eggNOG" id="COG0101">
    <property type="taxonomic scope" value="Bacteria"/>
</dbReference>
<dbReference type="HOGENOM" id="CLU_014673_0_2_4"/>
<dbReference type="OrthoDB" id="9811823at2"/>
<dbReference type="Proteomes" id="UP000006388">
    <property type="component" value="Chromosome"/>
</dbReference>
<dbReference type="GO" id="GO:0003723">
    <property type="term" value="F:RNA binding"/>
    <property type="evidence" value="ECO:0007669"/>
    <property type="project" value="InterPro"/>
</dbReference>
<dbReference type="GO" id="GO:0160147">
    <property type="term" value="F:tRNA pseudouridine(38-40) synthase activity"/>
    <property type="evidence" value="ECO:0007669"/>
    <property type="project" value="UniProtKB-EC"/>
</dbReference>
<dbReference type="GO" id="GO:0031119">
    <property type="term" value="P:tRNA pseudouridine synthesis"/>
    <property type="evidence" value="ECO:0007669"/>
    <property type="project" value="UniProtKB-UniRule"/>
</dbReference>
<dbReference type="CDD" id="cd02570">
    <property type="entry name" value="PseudoU_synth_EcTruA"/>
    <property type="match status" value="1"/>
</dbReference>
<dbReference type="FunFam" id="3.30.70.580:FF:000001">
    <property type="entry name" value="tRNA pseudouridine synthase A"/>
    <property type="match status" value="1"/>
</dbReference>
<dbReference type="Gene3D" id="3.30.70.660">
    <property type="entry name" value="Pseudouridine synthase I, catalytic domain, C-terminal subdomain"/>
    <property type="match status" value="1"/>
</dbReference>
<dbReference type="Gene3D" id="3.30.70.580">
    <property type="entry name" value="Pseudouridine synthase I, catalytic domain, N-terminal subdomain"/>
    <property type="match status" value="1"/>
</dbReference>
<dbReference type="HAMAP" id="MF_00171">
    <property type="entry name" value="TruA"/>
    <property type="match status" value="1"/>
</dbReference>
<dbReference type="InterPro" id="IPR020103">
    <property type="entry name" value="PsdUridine_synth_cat_dom_sf"/>
</dbReference>
<dbReference type="InterPro" id="IPR001406">
    <property type="entry name" value="PsdUridine_synth_TruA"/>
</dbReference>
<dbReference type="InterPro" id="IPR020097">
    <property type="entry name" value="PsdUridine_synth_TruA_a/b_dom"/>
</dbReference>
<dbReference type="InterPro" id="IPR020095">
    <property type="entry name" value="PsdUridine_synth_TruA_C"/>
</dbReference>
<dbReference type="InterPro" id="IPR020094">
    <property type="entry name" value="TruA/RsuA/RluB/E/F_N"/>
</dbReference>
<dbReference type="NCBIfam" id="TIGR00071">
    <property type="entry name" value="hisT_truA"/>
    <property type="match status" value="1"/>
</dbReference>
<dbReference type="PANTHER" id="PTHR11142">
    <property type="entry name" value="PSEUDOURIDYLATE SYNTHASE"/>
    <property type="match status" value="1"/>
</dbReference>
<dbReference type="PANTHER" id="PTHR11142:SF0">
    <property type="entry name" value="TRNA PSEUDOURIDINE SYNTHASE-LIKE 1"/>
    <property type="match status" value="1"/>
</dbReference>
<dbReference type="Pfam" id="PF01416">
    <property type="entry name" value="PseudoU_synth_1"/>
    <property type="match status" value="2"/>
</dbReference>
<dbReference type="PIRSF" id="PIRSF001430">
    <property type="entry name" value="tRNA_psdUrid_synth"/>
    <property type="match status" value="1"/>
</dbReference>
<dbReference type="SUPFAM" id="SSF55120">
    <property type="entry name" value="Pseudouridine synthase"/>
    <property type="match status" value="1"/>
</dbReference>
<feature type="chain" id="PRO_1000077094" description="tRNA pseudouridine synthase A">
    <location>
        <begin position="1"/>
        <end position="271"/>
    </location>
</feature>
<feature type="active site" description="Nucleophile" evidence="1">
    <location>
        <position position="56"/>
    </location>
</feature>
<feature type="binding site" evidence="1">
    <location>
        <position position="120"/>
    </location>
    <ligand>
        <name>substrate</name>
    </ligand>
</feature>
<sequence>MNGESKRIVLGVQYDGTPWQGWQTQLNGLTVQDRLEFALSKFTLQTVSTVCAGRTDAGVHGLEQVVHFDTTLERDMSSWVRGVNTFLPPSIAVRWATEVAHNPDEQDNFHARFSARSRMYQYVLYNNPVRSPLLEGKAGWVFRKLDVERMRTAAQHLLGEHDFSTFRSVQCQAKSPVKSMYSIKIEQRGDLIMFTLHANAFLHHMVRNIVGSLIYVGNGAQQPDWLKELLDGRDRKFAAPTFMPDGLYLAKIDYDPKWQLPQLEVQNFLWS</sequence>
<keyword id="KW-0413">Isomerase</keyword>
<keyword id="KW-0819">tRNA processing</keyword>
<comment type="function">
    <text evidence="1">Formation of pseudouridine at positions 38, 39 and 40 in the anticodon stem and loop of transfer RNAs.</text>
</comment>
<comment type="catalytic activity">
    <reaction evidence="1">
        <text>uridine(38/39/40) in tRNA = pseudouridine(38/39/40) in tRNA</text>
        <dbReference type="Rhea" id="RHEA:22376"/>
        <dbReference type="Rhea" id="RHEA-COMP:10085"/>
        <dbReference type="Rhea" id="RHEA-COMP:10087"/>
        <dbReference type="ChEBI" id="CHEBI:65314"/>
        <dbReference type="ChEBI" id="CHEBI:65315"/>
        <dbReference type="EC" id="5.4.99.12"/>
    </reaction>
</comment>
<comment type="subunit">
    <text evidence="1">Homodimer.</text>
</comment>
<comment type="similarity">
    <text evidence="1">Belongs to the tRNA pseudouridine synthase TruA family.</text>
</comment>
<protein>
    <recommendedName>
        <fullName evidence="1">tRNA pseudouridine synthase A</fullName>
        <ecNumber evidence="1">5.4.99.12</ecNumber>
    </recommendedName>
    <alternativeName>
        <fullName evidence="1">tRNA pseudouridine(38-40) synthase</fullName>
    </alternativeName>
    <alternativeName>
        <fullName evidence="1">tRNA pseudouridylate synthase I</fullName>
    </alternativeName>
    <alternativeName>
        <fullName evidence="1">tRNA-uridine isomerase I</fullName>
    </alternativeName>
</protein>
<organism>
    <name type="scientific">Janthinobacterium sp. (strain Marseille)</name>
    <name type="common">Minibacterium massiliensis</name>
    <dbReference type="NCBI Taxonomy" id="375286"/>
    <lineage>
        <taxon>Bacteria</taxon>
        <taxon>Pseudomonadati</taxon>
        <taxon>Pseudomonadota</taxon>
        <taxon>Betaproteobacteria</taxon>
        <taxon>Burkholderiales</taxon>
        <taxon>Oxalobacteraceae</taxon>
        <taxon>Janthinobacterium</taxon>
    </lineage>
</organism>
<accession>A6T009</accession>
<gene>
    <name evidence="1" type="primary">truA</name>
    <name type="ordered locus">mma_2166</name>
</gene>